<proteinExistence type="evidence at protein level"/>
<keyword id="KW-0025">Alternative splicing</keyword>
<keyword id="KW-0378">Hydrolase</keyword>
<keyword id="KW-0645">Protease</keyword>
<keyword id="KW-1185">Reference proteome</keyword>
<keyword id="KW-0788">Thiol protease</keyword>
<keyword id="KW-0833">Ubl conjugation pathway</keyword>
<gene>
    <name type="primary">ULP2B</name>
    <name type="ordered locus">At1g09730</name>
    <name type="ORF">F21M12.12</name>
    <name type="ORF">F21M12.29</name>
</gene>
<reference key="1">
    <citation type="journal article" date="2000" name="Nature">
        <title>Sequence and analysis of chromosome 1 of the plant Arabidopsis thaliana.</title>
        <authorList>
            <person name="Theologis A."/>
            <person name="Ecker J.R."/>
            <person name="Palm C.J."/>
            <person name="Federspiel N.A."/>
            <person name="Kaul S."/>
            <person name="White O."/>
            <person name="Alonso J."/>
            <person name="Altafi H."/>
            <person name="Araujo R."/>
            <person name="Bowman C.L."/>
            <person name="Brooks S.Y."/>
            <person name="Buehler E."/>
            <person name="Chan A."/>
            <person name="Chao Q."/>
            <person name="Chen H."/>
            <person name="Cheuk R.F."/>
            <person name="Chin C.W."/>
            <person name="Chung M.K."/>
            <person name="Conn L."/>
            <person name="Conway A.B."/>
            <person name="Conway A.R."/>
            <person name="Creasy T.H."/>
            <person name="Dewar K."/>
            <person name="Dunn P."/>
            <person name="Etgu P."/>
            <person name="Feldblyum T.V."/>
            <person name="Feng J.-D."/>
            <person name="Fong B."/>
            <person name="Fujii C.Y."/>
            <person name="Gill J.E."/>
            <person name="Goldsmith A.D."/>
            <person name="Haas B."/>
            <person name="Hansen N.F."/>
            <person name="Hughes B."/>
            <person name="Huizar L."/>
            <person name="Hunter J.L."/>
            <person name="Jenkins J."/>
            <person name="Johnson-Hopson C."/>
            <person name="Khan S."/>
            <person name="Khaykin E."/>
            <person name="Kim C.J."/>
            <person name="Koo H.L."/>
            <person name="Kremenetskaia I."/>
            <person name="Kurtz D.B."/>
            <person name="Kwan A."/>
            <person name="Lam B."/>
            <person name="Langin-Hooper S."/>
            <person name="Lee A."/>
            <person name="Lee J.M."/>
            <person name="Lenz C.A."/>
            <person name="Li J.H."/>
            <person name="Li Y.-P."/>
            <person name="Lin X."/>
            <person name="Liu S.X."/>
            <person name="Liu Z.A."/>
            <person name="Luros J.S."/>
            <person name="Maiti R."/>
            <person name="Marziali A."/>
            <person name="Militscher J."/>
            <person name="Miranda M."/>
            <person name="Nguyen M."/>
            <person name="Nierman W.C."/>
            <person name="Osborne B.I."/>
            <person name="Pai G."/>
            <person name="Peterson J."/>
            <person name="Pham P.K."/>
            <person name="Rizzo M."/>
            <person name="Rooney T."/>
            <person name="Rowley D."/>
            <person name="Sakano H."/>
            <person name="Salzberg S.L."/>
            <person name="Schwartz J.R."/>
            <person name="Shinn P."/>
            <person name="Southwick A.M."/>
            <person name="Sun H."/>
            <person name="Tallon L.J."/>
            <person name="Tambunga G."/>
            <person name="Toriumi M.J."/>
            <person name="Town C.D."/>
            <person name="Utterback T."/>
            <person name="Van Aken S."/>
            <person name="Vaysberg M."/>
            <person name="Vysotskaia V.S."/>
            <person name="Walker M."/>
            <person name="Wu D."/>
            <person name="Yu G."/>
            <person name="Fraser C.M."/>
            <person name="Venter J.C."/>
            <person name="Davis R.W."/>
        </authorList>
    </citation>
    <scope>NUCLEOTIDE SEQUENCE [LARGE SCALE GENOMIC DNA]</scope>
    <source>
        <strain>cv. Columbia</strain>
    </source>
</reference>
<reference key="2">
    <citation type="journal article" date="2017" name="Plant J.">
        <title>Araport11: a complete reannotation of the Arabidopsis thaliana reference genome.</title>
        <authorList>
            <person name="Cheng C.Y."/>
            <person name="Krishnakumar V."/>
            <person name="Chan A.P."/>
            <person name="Thibaud-Nissen F."/>
            <person name="Schobel S."/>
            <person name="Town C.D."/>
        </authorList>
    </citation>
    <scope>GENOME REANNOTATION</scope>
    <source>
        <strain>cv. Columbia</strain>
    </source>
</reference>
<reference key="3">
    <citation type="journal article" date="2003" name="Science">
        <title>Empirical analysis of transcriptional activity in the Arabidopsis genome.</title>
        <authorList>
            <person name="Yamada K."/>
            <person name="Lim J."/>
            <person name="Dale J.M."/>
            <person name="Chen H."/>
            <person name="Shinn P."/>
            <person name="Palm C.J."/>
            <person name="Southwick A.M."/>
            <person name="Wu H.C."/>
            <person name="Kim C.J."/>
            <person name="Nguyen M."/>
            <person name="Pham P.K."/>
            <person name="Cheuk R.F."/>
            <person name="Karlin-Newmann G."/>
            <person name="Liu S.X."/>
            <person name="Lam B."/>
            <person name="Sakano H."/>
            <person name="Wu T."/>
            <person name="Yu G."/>
            <person name="Miranda M."/>
            <person name="Quach H.L."/>
            <person name="Tripp M."/>
            <person name="Chang C.H."/>
            <person name="Lee J.M."/>
            <person name="Toriumi M.J."/>
            <person name="Chan M.M."/>
            <person name="Tang C.C."/>
            <person name="Onodera C.S."/>
            <person name="Deng J.M."/>
            <person name="Akiyama K."/>
            <person name="Ansari Y."/>
            <person name="Arakawa T."/>
            <person name="Banh J."/>
            <person name="Banno F."/>
            <person name="Bowser L."/>
            <person name="Brooks S.Y."/>
            <person name="Carninci P."/>
            <person name="Chao Q."/>
            <person name="Choy N."/>
            <person name="Enju A."/>
            <person name="Goldsmith A.D."/>
            <person name="Gurjal M."/>
            <person name="Hansen N.F."/>
            <person name="Hayashizaki Y."/>
            <person name="Johnson-Hopson C."/>
            <person name="Hsuan V.W."/>
            <person name="Iida K."/>
            <person name="Karnes M."/>
            <person name="Khan S."/>
            <person name="Koesema E."/>
            <person name="Ishida J."/>
            <person name="Jiang P.X."/>
            <person name="Jones T."/>
            <person name="Kawai J."/>
            <person name="Kamiya A."/>
            <person name="Meyers C."/>
            <person name="Nakajima M."/>
            <person name="Narusaka M."/>
            <person name="Seki M."/>
            <person name="Sakurai T."/>
            <person name="Satou M."/>
            <person name="Tamse R."/>
            <person name="Vaysberg M."/>
            <person name="Wallender E.K."/>
            <person name="Wong C."/>
            <person name="Yamamura Y."/>
            <person name="Yuan S."/>
            <person name="Shinozaki K."/>
            <person name="Davis R.W."/>
            <person name="Theologis A."/>
            <person name="Ecker J.R."/>
        </authorList>
    </citation>
    <scope>NUCLEOTIDE SEQUENCE [LARGE SCALE MRNA]</scope>
    <source>
        <strain>cv. Columbia</strain>
    </source>
</reference>
<reference key="4">
    <citation type="journal article" date="2006" name="Plant Physiol.">
        <title>SUMO-conjugating and SUMO-deconjugating enzymes from Arabidopsis.</title>
        <authorList>
            <person name="Colby T."/>
            <person name="Matthai A."/>
            <person name="Boeckelmann A."/>
            <person name="Stuible H.P."/>
        </authorList>
    </citation>
    <scope>IDENTIFICATION</scope>
    <scope>GENE FAMILY</scope>
    <scope>NOMENCLATURE</scope>
</reference>
<reference key="5">
    <citation type="journal article" date="2009" name="Plant Physiol.">
        <title>Large-scale Arabidopsis phosphoproteome profiling reveals novel chloroplast kinase substrates and phosphorylation networks.</title>
        <authorList>
            <person name="Reiland S."/>
            <person name="Messerli G."/>
            <person name="Baerenfaller K."/>
            <person name="Gerrits B."/>
            <person name="Endler A."/>
            <person name="Grossmann J."/>
            <person name="Gruissem W."/>
            <person name="Baginsky S."/>
        </authorList>
    </citation>
    <scope>IDENTIFICATION BY MASS SPECTROMETRY [LARGE SCALE ANALYSIS]</scope>
</reference>
<accession>Q8L7S0</accession>
<accession>F4I132</accession>
<evidence type="ECO:0000250" key="1"/>
<evidence type="ECO:0000256" key="2">
    <source>
        <dbReference type="SAM" id="MobiDB-lite"/>
    </source>
</evidence>
<evidence type="ECO:0000305" key="3"/>
<sequence length="931" mass="106013">MKKNFEVFDFKEEDELAESAAGKLLEKFTNPSPCNSPVLQRQRIQSFCNEKRVEEEEMEGPSCAEPATAVESDDHQCEDDSTLVTEAKESRTILTFGLETTDHLEETDAEHVNQGLMLGLKTEDLAKETDIDHDNHGLMFGLNSEDDIEETDVDHRVESFSCQLGGNSFYAETSSYSQRQLNSPFSDSSSSEEQIDMMSAIDESLSDRSALSEASDSEDDEEDWMTEHCFNDEEKIDLSTAVIMTSEYVILKDMHCAASLVIFSCNGIKIKSFLANNEEVPFSCEFGVEDIVSIQYNWYQNVGLIILRIRVLLKDENCHEDMEELKIAVKEHNWPNKQQKINSLHVKYPAVWNTDLEDDVEVSGYNLNQQKRYFPSFDEPFEDVVYPKGDPDAVSICKRDVELLQPETFVNDTIIDFYINYLKNQIQTEEKHRFHFFNSFFFRKLADLDKDPSSIADGKAAFLRVRKWTRKVDMFGKDYIFVPVNYNLHWSLIVICHPGEVANRTDLDLDDSKKVPCILHMDSIKGSHAGLKNLVQTYLCEEWKERHKETSDDISSRFMNLRFVSLELPQQENSFDCGLFLLHYLELFLAEAPLNFSPFKIYNASNFLYLNWFPPAEASLKRTLIQKLIFELLENRSREVSNEQNQSCESPVAVNDDMGIEVLSERCSPLIDCNGDMTQTQDDQGIEMTLLERSSMRHIQAANDSGMVLRDLFDSGSNNTGSLLEQLQQPFEDPSSFYHLSNDSSAREQVDMETGEQFMCLNAGEGNFQCITETTSPRASNSFSSWNLGIPLVQKEDETDLLSETSNSSNDSIGIIEDNPIENTHEEEIDESPPRETVSLKSATVGSNTADHTTENEEPVSTHIELVVPSSQNDRDEEKPLEHDLEIGDKTSEDVGDDCDQKEPMEEEDEKRAAKRPRLSSPTGEAEEMEK</sequence>
<organism>
    <name type="scientific">Arabidopsis thaliana</name>
    <name type="common">Mouse-ear cress</name>
    <dbReference type="NCBI Taxonomy" id="3702"/>
    <lineage>
        <taxon>Eukaryota</taxon>
        <taxon>Viridiplantae</taxon>
        <taxon>Streptophyta</taxon>
        <taxon>Embryophyta</taxon>
        <taxon>Tracheophyta</taxon>
        <taxon>Spermatophyta</taxon>
        <taxon>Magnoliopsida</taxon>
        <taxon>eudicotyledons</taxon>
        <taxon>Gunneridae</taxon>
        <taxon>Pentapetalae</taxon>
        <taxon>rosids</taxon>
        <taxon>malvids</taxon>
        <taxon>Brassicales</taxon>
        <taxon>Brassicaceae</taxon>
        <taxon>Camelineae</taxon>
        <taxon>Arabidopsis</taxon>
    </lineage>
</organism>
<dbReference type="EC" id="3.4.22.-"/>
<dbReference type="EMBL" id="AC000132">
    <property type="status" value="NOT_ANNOTATED_CDS"/>
    <property type="molecule type" value="Genomic_DNA"/>
</dbReference>
<dbReference type="EMBL" id="CP002684">
    <property type="protein sequence ID" value="AEE28486.1"/>
    <property type="molecule type" value="Genomic_DNA"/>
</dbReference>
<dbReference type="EMBL" id="AY128293">
    <property type="protein sequence ID" value="AAM91101.1"/>
    <property type="status" value="ALT_SEQ"/>
    <property type="molecule type" value="mRNA"/>
</dbReference>
<dbReference type="EMBL" id="BT001039">
    <property type="protein sequence ID" value="AAN46793.1"/>
    <property type="status" value="ALT_SEQ"/>
    <property type="molecule type" value="mRNA"/>
</dbReference>
<dbReference type="RefSeq" id="NP_001184951.1">
    <molecule id="Q8L7S0-1"/>
    <property type="nucleotide sequence ID" value="NM_001198022.2"/>
</dbReference>
<dbReference type="SMR" id="Q8L7S0"/>
<dbReference type="FunCoup" id="Q8L7S0">
    <property type="interactions" value="2324"/>
</dbReference>
<dbReference type="STRING" id="3702.Q8L7S0"/>
<dbReference type="MEROPS" id="C48.035"/>
<dbReference type="iPTMnet" id="Q8L7S0"/>
<dbReference type="PaxDb" id="3702-AT1G09730.1"/>
<dbReference type="EnsemblPlants" id="AT1G09730.2">
    <molecule id="Q8L7S0-1"/>
    <property type="protein sequence ID" value="AT1G09730.2"/>
    <property type="gene ID" value="AT1G09730"/>
</dbReference>
<dbReference type="GeneID" id="837501"/>
<dbReference type="Gramene" id="AT1G09730.2">
    <molecule id="Q8L7S0-1"/>
    <property type="protein sequence ID" value="AT1G09730.2"/>
    <property type="gene ID" value="AT1G09730"/>
</dbReference>
<dbReference type="KEGG" id="ath:AT1G09730"/>
<dbReference type="Araport" id="AT1G09730"/>
<dbReference type="TAIR" id="AT1G09730">
    <property type="gene designation" value="ASP1"/>
</dbReference>
<dbReference type="eggNOG" id="KOG0779">
    <property type="taxonomic scope" value="Eukaryota"/>
</dbReference>
<dbReference type="InParanoid" id="Q8L7S0"/>
<dbReference type="OMA" id="EEGPFCC"/>
<dbReference type="BRENDA" id="3.4.22.B67">
    <property type="organism ID" value="399"/>
</dbReference>
<dbReference type="PRO" id="PR:Q8L7S0"/>
<dbReference type="Proteomes" id="UP000006548">
    <property type="component" value="Chromosome 1"/>
</dbReference>
<dbReference type="ExpressionAtlas" id="Q8L7S0">
    <property type="expression patterns" value="baseline and differential"/>
</dbReference>
<dbReference type="GO" id="GO:0070139">
    <property type="term" value="F:SUMO-specific endopeptidase activity"/>
    <property type="evidence" value="ECO:0000250"/>
    <property type="project" value="UniProtKB"/>
</dbReference>
<dbReference type="GO" id="GO:0016926">
    <property type="term" value="P:protein desumoylation"/>
    <property type="evidence" value="ECO:0000250"/>
    <property type="project" value="UniProtKB"/>
</dbReference>
<dbReference type="GO" id="GO:0006508">
    <property type="term" value="P:proteolysis"/>
    <property type="evidence" value="ECO:0007669"/>
    <property type="project" value="UniProtKB-KW"/>
</dbReference>
<dbReference type="FunFam" id="3.30.310.130:FF:000006">
    <property type="entry name" value="Probable ubiquitin-like-specific protease 2B"/>
    <property type="match status" value="1"/>
</dbReference>
<dbReference type="Gene3D" id="1.10.418.20">
    <property type="match status" value="1"/>
</dbReference>
<dbReference type="Gene3D" id="3.30.310.130">
    <property type="entry name" value="Ubiquitin-related"/>
    <property type="match status" value="1"/>
</dbReference>
<dbReference type="InterPro" id="IPR038765">
    <property type="entry name" value="Papain-like_cys_pep_sf"/>
</dbReference>
<dbReference type="InterPro" id="IPR003653">
    <property type="entry name" value="Peptidase_C48_C"/>
</dbReference>
<dbReference type="PANTHER" id="PTHR47764:SF2">
    <property type="entry name" value="UBIQUITIN-LIKE PROTEASE FAMILY PROFILE DOMAIN-CONTAINING PROTEIN"/>
    <property type="match status" value="1"/>
</dbReference>
<dbReference type="PANTHER" id="PTHR47764">
    <property type="entry name" value="UBIQUITIN-LIKE-SPECIFIC PROTEASE 2B-RELATED"/>
    <property type="match status" value="1"/>
</dbReference>
<dbReference type="Pfam" id="PF02902">
    <property type="entry name" value="Peptidase_C48"/>
    <property type="match status" value="1"/>
</dbReference>
<dbReference type="Pfam" id="PF25352">
    <property type="entry name" value="PH_ULP"/>
    <property type="match status" value="1"/>
</dbReference>
<dbReference type="SUPFAM" id="SSF54001">
    <property type="entry name" value="Cysteine proteinases"/>
    <property type="match status" value="1"/>
</dbReference>
<dbReference type="PROSITE" id="PS50600">
    <property type="entry name" value="ULP_PROTEASE"/>
    <property type="match status" value="1"/>
</dbReference>
<feature type="chain" id="PRO_0000395974" description="Probable ubiquitin-like-specific protease 2B">
    <location>
        <begin position="1"/>
        <end position="931"/>
    </location>
</feature>
<feature type="region of interest" description="Disordered" evidence="2">
    <location>
        <begin position="204"/>
        <end position="224"/>
    </location>
</feature>
<feature type="region of interest" description="Disordered" evidence="2">
    <location>
        <begin position="825"/>
        <end position="931"/>
    </location>
</feature>
<feature type="compositionally biased region" description="Acidic residues" evidence="2">
    <location>
        <begin position="215"/>
        <end position="224"/>
    </location>
</feature>
<feature type="compositionally biased region" description="Polar residues" evidence="2">
    <location>
        <begin position="839"/>
        <end position="851"/>
    </location>
</feature>
<feature type="compositionally biased region" description="Basic and acidic residues" evidence="2">
    <location>
        <begin position="873"/>
        <end position="904"/>
    </location>
</feature>
<feature type="active site" evidence="1">
    <location>
        <position position="489"/>
    </location>
</feature>
<feature type="active site" evidence="1">
    <location>
        <position position="522"/>
    </location>
</feature>
<feature type="active site" evidence="1">
    <location>
        <position position="577"/>
    </location>
</feature>
<name>ULP2B_ARATH</name>
<protein>
    <recommendedName>
        <fullName>Probable ubiquitin-like-specific protease 2B</fullName>
        <ecNumber>3.4.22.-</ecNumber>
    </recommendedName>
</protein>
<comment type="function">
    <text evidence="1">Protease that catalyzes two essential functions in the SUMO pathway: processing of full-length SUMOs to their mature forms and deconjugation of SUMO from targeted proteins.</text>
</comment>
<comment type="alternative products">
    <event type="alternative splicing"/>
    <isoform>
        <id>Q8L7S0-1</id>
        <name>1</name>
        <sequence type="displayed"/>
    </isoform>
    <text>A number of isoforms are produced. According to EST sequences.</text>
</comment>
<comment type="similarity">
    <text evidence="3">Belongs to the peptidase C48 family.</text>
</comment>
<comment type="sequence caution" evidence="3">
    <conflict type="miscellaneous discrepancy">
        <sequence resource="EMBL-CDS" id="AAM91101"/>
    </conflict>
    <text>Intron retention.</text>
</comment>
<comment type="sequence caution" evidence="3">
    <conflict type="miscellaneous discrepancy">
        <sequence resource="EMBL-CDS" id="AAN46793"/>
    </conflict>
    <text>Intron retention.</text>
</comment>